<organism>
    <name type="scientific">Escherichia coli</name>
    <dbReference type="NCBI Taxonomy" id="562"/>
    <lineage>
        <taxon>Bacteria</taxon>
        <taxon>Pseudomonadati</taxon>
        <taxon>Pseudomonadota</taxon>
        <taxon>Gammaproteobacteria</taxon>
        <taxon>Enterobacterales</taxon>
        <taxon>Enterobacteriaceae</taxon>
        <taxon>Escherichia</taxon>
    </lineage>
</organism>
<protein>
    <recommendedName>
        <fullName>K88 minor fimbrial subunit FaeF</fullName>
    </recommendedName>
</protein>
<accession>P25447</accession>
<name>FAEF_ECOLX</name>
<feature type="signal peptide">
    <location>
        <begin position="1"/>
        <end position="22"/>
    </location>
</feature>
<feature type="chain" id="PRO_0000009242" description="K88 minor fimbrial subunit FaeF">
    <location>
        <begin position="23"/>
        <end position="163"/>
    </location>
</feature>
<comment type="function">
    <text>K88 minor fimbrial subunit, plays an essential role in the biogenesis of the K88 fimbriae. required at some step in the initiation and/or elongation of the K88 fimbriae.</text>
</comment>
<comment type="subcellular location">
    <subcellularLocation>
        <location>Fimbrium</location>
    </subcellularLocation>
    <text>Located in or along the K88 fimbrial structure.</text>
</comment>
<reference key="1">
    <citation type="journal article" date="1992" name="J. Bacteriol.">
        <title>Identification of minor fimbrial subunits involved in biosynthesis of K88 fimbriae.</title>
        <authorList>
            <person name="Bakker D."/>
            <person name="Willemsen P.T.J."/>
            <person name="Willems R.H."/>
            <person name="Huisman T.T."/>
            <person name="Mooi F.R."/>
            <person name="Oudega B."/>
            <person name="Stegehuis F."/>
            <person name="de Graaf F.K."/>
        </authorList>
    </citation>
    <scope>NUCLEOTIDE SEQUENCE [GENOMIC DNA]</scope>
</reference>
<reference key="2">
    <citation type="journal article" date="1991" name="Mol. Microbiol.">
        <title>Structure and function of periplasmic chaperone-like proteins involved in the biosynthesis of K88 and K99 fimbriae in enterotoxigenic Escherichia coli.</title>
        <authorList>
            <person name="Bakker D."/>
            <person name="Vader C.E.M."/>
            <person name="Roosendaal B."/>
            <person name="Mooi F.R."/>
            <person name="Oudega B."/>
            <person name="de Graaf F.K."/>
        </authorList>
    </citation>
    <scope>NUCLEOTIDE SEQUENCE [GENOMIC DNA] OF 1-13</scope>
</reference>
<keyword id="KW-0281">Fimbrium</keyword>
<keyword id="KW-0614">Plasmid</keyword>
<keyword id="KW-0732">Signal</keyword>
<dbReference type="EMBL" id="Z11699">
    <property type="protein sequence ID" value="CAA77757.1"/>
    <property type="molecule type" value="Genomic_DNA"/>
</dbReference>
<dbReference type="EMBL" id="X56003">
    <property type="protein sequence ID" value="CAA39479.1"/>
    <property type="molecule type" value="Genomic_DNA"/>
</dbReference>
<dbReference type="PIR" id="B45725">
    <property type="entry name" value="B45725"/>
</dbReference>
<dbReference type="RefSeq" id="WP_000753462.1">
    <property type="nucleotide sequence ID" value="NZ_WFLG01000017.1"/>
</dbReference>
<dbReference type="OMA" id="GNMAYIT"/>
<dbReference type="GO" id="GO:0009289">
    <property type="term" value="C:pilus"/>
    <property type="evidence" value="ECO:0007669"/>
    <property type="project" value="UniProtKB-SubCell"/>
</dbReference>
<dbReference type="InterPro" id="IPR035191">
    <property type="entry name" value="FaeF"/>
</dbReference>
<dbReference type="Pfam" id="PF17547">
    <property type="entry name" value="DUF5462"/>
    <property type="match status" value="1"/>
</dbReference>
<proteinExistence type="predicted"/>
<gene>
    <name type="primary">faeF</name>
</gene>
<sequence length="163" mass="17393">MKKTMMAAALVLSALSIQSALAAEYSEKTQYLGVVNGQVVGNSVVKVTRTPTDPVLYRSGSNSPLPAELIIRHAESRPASGGLANITVKEALPDNGEARITLKTSLMVDGKRVALSARQQGEDVVITVPEAQQQIELRTDAPAELEVPVSYRGNLQIALQVED</sequence>
<geneLocation type="plasmid">
    <name>pFM205</name>
</geneLocation>